<sequence length="537" mass="60608">MTKYIFVTGGVVSGLGKGITSASIGLLMKARGYKTTNIKIDPYINYDAGTMNPYQHGEVFVLDDGGEVDLDLGNYERFLDTELTFDHNITTGKVYSTVIEKERRGEYLGATVQVIPHITDEIKRRIREIAKDYEVVVVEIGGTVGDIESMPFLEAARQMQLEEGRDNVAFVHVTYVPKLKVVGEQKTKPTQHSVKELRSLGIQPDAIVARSEDPLEEAARKKISLFTNVPEEAVISAYDVEDTYEVPLLLEREGLGKYLTKRLKLEDREPDLKDWEKMVAKYKALTETVEIAIVGKYVKLQDSYLSIKEALKHASVSNEVKVKIRWIEAEDVETHGTKLLEGVDGIIIPGGFGARGAEGKIQAIRYARENDIPFLGICFGFQLTVVEFARNVLGMKGAHSTEIDPQTPYPVVDLMPEQRNLDRLGGTMRLGAYPVKIKKGTLAYSLYNKELVYERHRHRWEVNPNYIEALEKAGLVFSGVAGDDERRMEILELPDKRYFIATQFHPEFKSRPMRPAPVFHGLVRAAKEYKQEKNVTH</sequence>
<name>PYRG_PYRFU</name>
<comment type="function">
    <text evidence="1">Catalyzes the ATP-dependent amination of UTP to CTP with either L-glutamine or ammonia as the source of nitrogen. Regulates intracellular CTP levels through interactions with the four ribonucleotide triphosphates.</text>
</comment>
<comment type="catalytic activity">
    <reaction evidence="1">
        <text>UTP + L-glutamine + ATP + H2O = CTP + L-glutamate + ADP + phosphate + 2 H(+)</text>
        <dbReference type="Rhea" id="RHEA:26426"/>
        <dbReference type="ChEBI" id="CHEBI:15377"/>
        <dbReference type="ChEBI" id="CHEBI:15378"/>
        <dbReference type="ChEBI" id="CHEBI:29985"/>
        <dbReference type="ChEBI" id="CHEBI:30616"/>
        <dbReference type="ChEBI" id="CHEBI:37563"/>
        <dbReference type="ChEBI" id="CHEBI:43474"/>
        <dbReference type="ChEBI" id="CHEBI:46398"/>
        <dbReference type="ChEBI" id="CHEBI:58359"/>
        <dbReference type="ChEBI" id="CHEBI:456216"/>
        <dbReference type="EC" id="6.3.4.2"/>
    </reaction>
</comment>
<comment type="catalytic activity">
    <reaction evidence="1">
        <text>L-glutamine + H2O = L-glutamate + NH4(+)</text>
        <dbReference type="Rhea" id="RHEA:15889"/>
        <dbReference type="ChEBI" id="CHEBI:15377"/>
        <dbReference type="ChEBI" id="CHEBI:28938"/>
        <dbReference type="ChEBI" id="CHEBI:29985"/>
        <dbReference type="ChEBI" id="CHEBI:58359"/>
    </reaction>
</comment>
<comment type="catalytic activity">
    <reaction evidence="1">
        <text>UTP + NH4(+) + ATP = CTP + ADP + phosphate + 2 H(+)</text>
        <dbReference type="Rhea" id="RHEA:16597"/>
        <dbReference type="ChEBI" id="CHEBI:15378"/>
        <dbReference type="ChEBI" id="CHEBI:28938"/>
        <dbReference type="ChEBI" id="CHEBI:30616"/>
        <dbReference type="ChEBI" id="CHEBI:37563"/>
        <dbReference type="ChEBI" id="CHEBI:43474"/>
        <dbReference type="ChEBI" id="CHEBI:46398"/>
        <dbReference type="ChEBI" id="CHEBI:456216"/>
    </reaction>
</comment>
<comment type="activity regulation">
    <text evidence="1">Allosterically activated by GTP, when glutamine is the substrate; GTP has no effect on the reaction when ammonia is the substrate. The allosteric effector GTP functions by stabilizing the protein conformation that binds the tetrahedral intermediate(s) formed during glutamine hydrolysis. Inhibited by the product CTP, via allosteric rather than competitive inhibition.</text>
</comment>
<comment type="pathway">
    <text evidence="1">Pyrimidine metabolism; CTP biosynthesis via de novo pathway; CTP from UDP: step 2/2.</text>
</comment>
<comment type="subunit">
    <text evidence="1">Homotetramer.</text>
</comment>
<comment type="miscellaneous">
    <text evidence="1">CTPSs have evolved a hybrid strategy for distinguishing between UTP and CTP. The overlapping regions of the product feedback inhibitory and substrate sites recognize a common feature in both compounds, the triphosphate moiety. To differentiate isosteric substrate and product pyrimidine rings, an additional pocket far from the expected kinase/ligase catalytic site, specifically recognizes the cytosine and ribose portions of the product inhibitor.</text>
</comment>
<comment type="similarity">
    <text evidence="1">Belongs to the CTP synthase family.</text>
</comment>
<comment type="sequence caution" evidence="2">
    <conflict type="erroneous initiation">
        <sequence resource="EMBL-CDS" id="AAL81963"/>
    </conflict>
</comment>
<keyword id="KW-0067">ATP-binding</keyword>
<keyword id="KW-0315">Glutamine amidotransferase</keyword>
<keyword id="KW-0436">Ligase</keyword>
<keyword id="KW-0460">Magnesium</keyword>
<keyword id="KW-0479">Metal-binding</keyword>
<keyword id="KW-0547">Nucleotide-binding</keyword>
<keyword id="KW-0665">Pyrimidine biosynthesis</keyword>
<keyword id="KW-1185">Reference proteome</keyword>
<accession>Q8TZY6</accession>
<gene>
    <name evidence="1" type="primary">pyrG</name>
    <name type="ordered locus">PF1839</name>
</gene>
<protein>
    <recommendedName>
        <fullName evidence="1">CTP synthase</fullName>
        <ecNumber evidence="1">6.3.4.2</ecNumber>
    </recommendedName>
    <alternativeName>
        <fullName evidence="1">Cytidine 5'-triphosphate synthase</fullName>
    </alternativeName>
    <alternativeName>
        <fullName evidence="1">Cytidine triphosphate synthetase</fullName>
        <shortName evidence="1">CTP synthetase</shortName>
        <shortName evidence="1">CTPS</shortName>
    </alternativeName>
    <alternativeName>
        <fullName evidence="1">UTP--ammonia ligase</fullName>
    </alternativeName>
</protein>
<evidence type="ECO:0000255" key="1">
    <source>
        <dbReference type="HAMAP-Rule" id="MF_01227"/>
    </source>
</evidence>
<evidence type="ECO:0000305" key="2"/>
<proteinExistence type="inferred from homology"/>
<reference key="1">
    <citation type="journal article" date="1999" name="Genetics">
        <title>Divergence of the hyperthermophilic archaea Pyrococcus furiosus and P. horikoshii inferred from complete genomic sequences.</title>
        <authorList>
            <person name="Maeder D.L."/>
            <person name="Weiss R.B."/>
            <person name="Dunn D.M."/>
            <person name="Cherry J.L."/>
            <person name="Gonzalez J.M."/>
            <person name="DiRuggiero J."/>
            <person name="Robb F.T."/>
        </authorList>
    </citation>
    <scope>NUCLEOTIDE SEQUENCE [LARGE SCALE GENOMIC DNA]</scope>
    <source>
        <strain>ATCC 43587 / DSM 3638 / JCM 8422 / Vc1</strain>
    </source>
</reference>
<feature type="chain" id="PRO_0000138266" description="CTP synthase">
    <location>
        <begin position="1"/>
        <end position="537"/>
    </location>
</feature>
<feature type="domain" description="Glutamine amidotransferase type-1" evidence="1">
    <location>
        <begin position="290"/>
        <end position="532"/>
    </location>
</feature>
<feature type="region of interest" description="Amidoligase domain" evidence="1">
    <location>
        <begin position="1"/>
        <end position="265"/>
    </location>
</feature>
<feature type="active site" description="Nucleophile; for glutamine hydrolysis" evidence="1">
    <location>
        <position position="378"/>
    </location>
</feature>
<feature type="active site" evidence="1">
    <location>
        <position position="505"/>
    </location>
</feature>
<feature type="active site" evidence="1">
    <location>
        <position position="507"/>
    </location>
</feature>
<feature type="binding site" evidence="1">
    <location>
        <position position="13"/>
    </location>
    <ligand>
        <name>CTP</name>
        <dbReference type="ChEBI" id="CHEBI:37563"/>
        <note>allosteric inhibitor</note>
    </ligand>
</feature>
<feature type="binding site" evidence="1">
    <location>
        <position position="13"/>
    </location>
    <ligand>
        <name>UTP</name>
        <dbReference type="ChEBI" id="CHEBI:46398"/>
    </ligand>
</feature>
<feature type="binding site" evidence="1">
    <location>
        <begin position="14"/>
        <end position="19"/>
    </location>
    <ligand>
        <name>ATP</name>
        <dbReference type="ChEBI" id="CHEBI:30616"/>
    </ligand>
</feature>
<feature type="binding site" evidence="1">
    <location>
        <position position="54"/>
    </location>
    <ligand>
        <name>L-glutamine</name>
        <dbReference type="ChEBI" id="CHEBI:58359"/>
    </ligand>
</feature>
<feature type="binding site" evidence="1">
    <location>
        <position position="71"/>
    </location>
    <ligand>
        <name>ATP</name>
        <dbReference type="ChEBI" id="CHEBI:30616"/>
    </ligand>
</feature>
<feature type="binding site" evidence="1">
    <location>
        <position position="71"/>
    </location>
    <ligand>
        <name>Mg(2+)</name>
        <dbReference type="ChEBI" id="CHEBI:18420"/>
    </ligand>
</feature>
<feature type="binding site" evidence="1">
    <location>
        <position position="139"/>
    </location>
    <ligand>
        <name>Mg(2+)</name>
        <dbReference type="ChEBI" id="CHEBI:18420"/>
    </ligand>
</feature>
<feature type="binding site" evidence="1">
    <location>
        <begin position="146"/>
        <end position="148"/>
    </location>
    <ligand>
        <name>CTP</name>
        <dbReference type="ChEBI" id="CHEBI:37563"/>
        <note>allosteric inhibitor</note>
    </ligand>
</feature>
<feature type="binding site" evidence="1">
    <location>
        <begin position="186"/>
        <end position="191"/>
    </location>
    <ligand>
        <name>CTP</name>
        <dbReference type="ChEBI" id="CHEBI:37563"/>
        <note>allosteric inhibitor</note>
    </ligand>
</feature>
<feature type="binding site" evidence="1">
    <location>
        <begin position="186"/>
        <end position="191"/>
    </location>
    <ligand>
        <name>UTP</name>
        <dbReference type="ChEBI" id="CHEBI:46398"/>
    </ligand>
</feature>
<feature type="binding site" evidence="1">
    <location>
        <position position="222"/>
    </location>
    <ligand>
        <name>CTP</name>
        <dbReference type="ChEBI" id="CHEBI:37563"/>
        <note>allosteric inhibitor</note>
    </ligand>
</feature>
<feature type="binding site" evidence="1">
    <location>
        <position position="222"/>
    </location>
    <ligand>
        <name>UTP</name>
        <dbReference type="ChEBI" id="CHEBI:46398"/>
    </ligand>
</feature>
<feature type="binding site" evidence="1">
    <location>
        <position position="351"/>
    </location>
    <ligand>
        <name>L-glutamine</name>
        <dbReference type="ChEBI" id="CHEBI:58359"/>
    </ligand>
</feature>
<feature type="binding site" evidence="1">
    <location>
        <begin position="379"/>
        <end position="382"/>
    </location>
    <ligand>
        <name>L-glutamine</name>
        <dbReference type="ChEBI" id="CHEBI:58359"/>
    </ligand>
</feature>
<feature type="binding site" evidence="1">
    <location>
        <position position="402"/>
    </location>
    <ligand>
        <name>L-glutamine</name>
        <dbReference type="ChEBI" id="CHEBI:58359"/>
    </ligand>
</feature>
<feature type="binding site" evidence="1">
    <location>
        <position position="459"/>
    </location>
    <ligand>
        <name>L-glutamine</name>
        <dbReference type="ChEBI" id="CHEBI:58359"/>
    </ligand>
</feature>
<organism>
    <name type="scientific">Pyrococcus furiosus (strain ATCC 43587 / DSM 3638 / JCM 8422 / Vc1)</name>
    <dbReference type="NCBI Taxonomy" id="186497"/>
    <lineage>
        <taxon>Archaea</taxon>
        <taxon>Methanobacteriati</taxon>
        <taxon>Methanobacteriota</taxon>
        <taxon>Thermococci</taxon>
        <taxon>Thermococcales</taxon>
        <taxon>Thermococcaceae</taxon>
        <taxon>Pyrococcus</taxon>
    </lineage>
</organism>
<dbReference type="EC" id="6.3.4.2" evidence="1"/>
<dbReference type="EMBL" id="AE009950">
    <property type="protein sequence ID" value="AAL81963.1"/>
    <property type="status" value="ALT_INIT"/>
    <property type="molecule type" value="Genomic_DNA"/>
</dbReference>
<dbReference type="RefSeq" id="WP_011012979.1">
    <property type="nucleotide sequence ID" value="NZ_CP023154.1"/>
</dbReference>
<dbReference type="SMR" id="Q8TZY6"/>
<dbReference type="STRING" id="186497.PF1839"/>
<dbReference type="MEROPS" id="C26.964"/>
<dbReference type="PaxDb" id="186497-PF1839"/>
<dbReference type="GeneID" id="41713658"/>
<dbReference type="KEGG" id="pfu:PF1839"/>
<dbReference type="PATRIC" id="fig|186497.12.peg.1910"/>
<dbReference type="eggNOG" id="arCOG00063">
    <property type="taxonomic scope" value="Archaea"/>
</dbReference>
<dbReference type="HOGENOM" id="CLU_011675_5_0_2"/>
<dbReference type="OrthoDB" id="52769at2157"/>
<dbReference type="PhylomeDB" id="Q8TZY6"/>
<dbReference type="UniPathway" id="UPA00159">
    <property type="reaction ID" value="UER00277"/>
</dbReference>
<dbReference type="Proteomes" id="UP000001013">
    <property type="component" value="Chromosome"/>
</dbReference>
<dbReference type="GO" id="GO:0005524">
    <property type="term" value="F:ATP binding"/>
    <property type="evidence" value="ECO:0007669"/>
    <property type="project" value="UniProtKB-KW"/>
</dbReference>
<dbReference type="GO" id="GO:0003883">
    <property type="term" value="F:CTP synthase activity"/>
    <property type="evidence" value="ECO:0007669"/>
    <property type="project" value="UniProtKB-UniRule"/>
</dbReference>
<dbReference type="GO" id="GO:0004359">
    <property type="term" value="F:glutaminase activity"/>
    <property type="evidence" value="ECO:0007669"/>
    <property type="project" value="RHEA"/>
</dbReference>
<dbReference type="GO" id="GO:0042802">
    <property type="term" value="F:identical protein binding"/>
    <property type="evidence" value="ECO:0007669"/>
    <property type="project" value="TreeGrafter"/>
</dbReference>
<dbReference type="GO" id="GO:0046872">
    <property type="term" value="F:metal ion binding"/>
    <property type="evidence" value="ECO:0007669"/>
    <property type="project" value="UniProtKB-KW"/>
</dbReference>
<dbReference type="GO" id="GO:0044210">
    <property type="term" value="P:'de novo' CTP biosynthetic process"/>
    <property type="evidence" value="ECO:0007669"/>
    <property type="project" value="UniProtKB-UniRule"/>
</dbReference>
<dbReference type="GO" id="GO:0019856">
    <property type="term" value="P:pyrimidine nucleobase biosynthetic process"/>
    <property type="evidence" value="ECO:0007669"/>
    <property type="project" value="TreeGrafter"/>
</dbReference>
<dbReference type="CDD" id="cd03113">
    <property type="entry name" value="CTPS_N"/>
    <property type="match status" value="1"/>
</dbReference>
<dbReference type="CDD" id="cd01746">
    <property type="entry name" value="GATase1_CTP_Synthase"/>
    <property type="match status" value="1"/>
</dbReference>
<dbReference type="FunFam" id="3.40.50.300:FF:000009">
    <property type="entry name" value="CTP synthase"/>
    <property type="match status" value="1"/>
</dbReference>
<dbReference type="FunFam" id="3.40.50.880:FF:000002">
    <property type="entry name" value="CTP synthase"/>
    <property type="match status" value="1"/>
</dbReference>
<dbReference type="Gene3D" id="3.40.50.880">
    <property type="match status" value="1"/>
</dbReference>
<dbReference type="Gene3D" id="3.40.50.300">
    <property type="entry name" value="P-loop containing nucleotide triphosphate hydrolases"/>
    <property type="match status" value="1"/>
</dbReference>
<dbReference type="HAMAP" id="MF_01227">
    <property type="entry name" value="PyrG"/>
    <property type="match status" value="1"/>
</dbReference>
<dbReference type="InterPro" id="IPR029062">
    <property type="entry name" value="Class_I_gatase-like"/>
</dbReference>
<dbReference type="InterPro" id="IPR004468">
    <property type="entry name" value="CTP_synthase"/>
</dbReference>
<dbReference type="InterPro" id="IPR017456">
    <property type="entry name" value="CTP_synthase_N"/>
</dbReference>
<dbReference type="InterPro" id="IPR017926">
    <property type="entry name" value="GATASE"/>
</dbReference>
<dbReference type="InterPro" id="IPR033828">
    <property type="entry name" value="GATase1_CTP_Synthase"/>
</dbReference>
<dbReference type="InterPro" id="IPR027417">
    <property type="entry name" value="P-loop_NTPase"/>
</dbReference>
<dbReference type="NCBIfam" id="NF003792">
    <property type="entry name" value="PRK05380.1"/>
    <property type="match status" value="1"/>
</dbReference>
<dbReference type="NCBIfam" id="TIGR00337">
    <property type="entry name" value="PyrG"/>
    <property type="match status" value="1"/>
</dbReference>
<dbReference type="PANTHER" id="PTHR11550">
    <property type="entry name" value="CTP SYNTHASE"/>
    <property type="match status" value="1"/>
</dbReference>
<dbReference type="PANTHER" id="PTHR11550:SF0">
    <property type="entry name" value="CTP SYNTHASE-RELATED"/>
    <property type="match status" value="1"/>
</dbReference>
<dbReference type="Pfam" id="PF06418">
    <property type="entry name" value="CTP_synth_N"/>
    <property type="match status" value="1"/>
</dbReference>
<dbReference type="Pfam" id="PF00117">
    <property type="entry name" value="GATase"/>
    <property type="match status" value="1"/>
</dbReference>
<dbReference type="SUPFAM" id="SSF52317">
    <property type="entry name" value="Class I glutamine amidotransferase-like"/>
    <property type="match status" value="1"/>
</dbReference>
<dbReference type="SUPFAM" id="SSF52540">
    <property type="entry name" value="P-loop containing nucleoside triphosphate hydrolases"/>
    <property type="match status" value="1"/>
</dbReference>
<dbReference type="PROSITE" id="PS51273">
    <property type="entry name" value="GATASE_TYPE_1"/>
    <property type="match status" value="1"/>
</dbReference>